<evidence type="ECO:0000255" key="1"/>
<evidence type="ECO:0000256" key="2">
    <source>
        <dbReference type="SAM" id="MobiDB-lite"/>
    </source>
</evidence>
<evidence type="ECO:0000269" key="3">
    <source>
    </source>
</evidence>
<evidence type="ECO:0000269" key="4">
    <source>
    </source>
</evidence>
<evidence type="ECO:0000269" key="5">
    <source>
    </source>
</evidence>
<evidence type="ECO:0000269" key="6">
    <source>
    </source>
</evidence>
<evidence type="ECO:0000303" key="7">
    <source>
    </source>
</evidence>
<evidence type="ECO:0000305" key="8"/>
<evidence type="ECO:0000312" key="9">
    <source>
        <dbReference type="Araport" id="AT3G17040"/>
    </source>
</evidence>
<evidence type="ECO:0000312" key="10">
    <source>
        <dbReference type="EMBL" id="AAM13111.1"/>
    </source>
</evidence>
<evidence type="ECO:0000312" key="11">
    <source>
        <dbReference type="EMBL" id="AEE75897.1"/>
    </source>
</evidence>
<evidence type="ECO:0000312" key="12">
    <source>
        <dbReference type="EMBL" id="BAA94982.1"/>
    </source>
</evidence>
<comment type="function">
    <text evidence="3 5 6">Involved, directly or indirectly, in the processing of chloroplast encoded mRNAs. Exhibits sequence-specific RNA binding and RNA remodeling activities, probably leading to the activation of translation of the target gene cluster psbB-psbT-psbH-petB-petD (PubMed:22451905). Blocks 5'-3' and 3'-5' exoribonucleases (e.g. polynucleotide phosphorylase (PNPase), RNase R) in vitro (PubMed:22451905). Necessary for intercistronic RNA processing of the psbH 5' untranslated region or the stabilization of 5' processed psbH RNAs. Also required for the synthesis of psbB (PubMed:11549768, PubMed:15918885, PubMed:22451905).</text>
</comment>
<comment type="subunit">
    <text evidence="5 6">May form homomultimers (PubMed:22451905). Part of a multi-subunit complex in the range of 60-190 and 600-800 kDa in chloroplast membranes (PubMed:15918885).</text>
</comment>
<comment type="subcellular location">
    <subcellularLocation>
        <location evidence="1">Plastid</location>
        <location evidence="1">Chloroplast</location>
    </subcellularLocation>
    <subcellularLocation>
        <location evidence="5">Plastid</location>
        <location evidence="5">Chloroplast membrane</location>
        <topology evidence="5">Peripheral membrane protein</topology>
        <orientation evidence="5">Stromal side</orientation>
    </subcellularLocation>
    <subcellularLocation>
        <location evidence="5">Plastid</location>
        <location evidence="5">Chloroplast stroma</location>
    </subcellularLocation>
</comment>
<comment type="alternative products">
    <event type="alternative splicing"/>
    <isoform>
        <id>Q8RWG2-1</id>
        <name>1</name>
        <sequence type="displayed"/>
    </isoform>
    <text evidence="8">Additional isoforms seem to exist.</text>
</comment>
<comment type="induction">
    <text evidence="4">By continuous red light (Rc at 8 umol.m-2.s-1).</text>
</comment>
<comment type="disruption phenotype">
    <text evidence="3 5 6">In hcf107-2, reduced accumulation of 5'-end-processed psbH transcript, as well as psbB translation, resulting in disruption of photosystem II (PSII) and seedling lethal plants. Specific loss of processed RNAs with a 5' end 44nt upstream of the psbH start codon in the psbB-psbT-psbH-petB-petD gene cluster.</text>
</comment>
<comment type="sequence caution" evidence="8">
    <conflict type="erroneous gene model prediction">
        <sequence resource="EMBL-CDS" id="BAA94982"/>
    </conflict>
</comment>
<feature type="transit peptide" description="Chloroplast" evidence="1">
    <location>
        <begin position="1"/>
        <end position="68"/>
    </location>
</feature>
<feature type="chain" id="PRO_0000433486" description="Protein high chlorophyll fluorescent 107">
    <location>
        <begin position="69"/>
        <end position="652"/>
    </location>
</feature>
<feature type="repeat" description="TPR 1" evidence="1">
    <location>
        <begin position="168"/>
        <end position="201"/>
    </location>
</feature>
<feature type="repeat" description="TPR 2" evidence="1">
    <location>
        <begin position="202"/>
        <end position="235"/>
    </location>
</feature>
<feature type="repeat" description="TPR 3" evidence="1">
    <location>
        <begin position="237"/>
        <end position="270"/>
    </location>
</feature>
<feature type="repeat" description="TPR 4" evidence="1">
    <location>
        <begin position="271"/>
        <end position="304"/>
    </location>
</feature>
<feature type="repeat" description="TPR 5" evidence="1">
    <location>
        <begin position="305"/>
        <end position="338"/>
    </location>
</feature>
<feature type="repeat" description="TPR 6" evidence="1">
    <location>
        <begin position="339"/>
        <end position="372"/>
    </location>
</feature>
<feature type="repeat" description="TPR 7" evidence="1">
    <location>
        <begin position="374"/>
        <end position="406"/>
    </location>
</feature>
<feature type="repeat" description="TPR 8" evidence="1">
    <location>
        <begin position="407"/>
        <end position="440"/>
    </location>
</feature>
<feature type="repeat" description="TPR 9" evidence="1">
    <location>
        <begin position="441"/>
        <end position="474"/>
    </location>
</feature>
<feature type="repeat" description="TPR 10" evidence="1">
    <location>
        <begin position="478"/>
        <end position="511"/>
    </location>
</feature>
<feature type="repeat" description="TPR 11" evidence="1">
    <location>
        <begin position="543"/>
        <end position="576"/>
    </location>
</feature>
<feature type="repeat" description="TPR 12" evidence="1">
    <location>
        <begin position="598"/>
        <end position="631"/>
    </location>
</feature>
<feature type="region of interest" description="Disordered" evidence="2">
    <location>
        <begin position="1"/>
        <end position="21"/>
    </location>
</feature>
<feature type="region of interest" description="Disordered" evidence="2">
    <location>
        <begin position="78"/>
        <end position="121"/>
    </location>
</feature>
<feature type="region of interest" description="Disordered" evidence="2">
    <location>
        <begin position="585"/>
        <end position="610"/>
    </location>
</feature>
<feature type="compositionally biased region" description="Basic and acidic residues" evidence="2">
    <location>
        <begin position="105"/>
        <end position="121"/>
    </location>
</feature>
<feature type="mutagenesis site" description="In hcf107-1; reduced accumulation of 5'-end-processed psbH transcript and reduced psbB translation, resulting in disruption of photosystem II (PSII) and seedling lethal plants." evidence="5">
    <original>A</original>
    <variation>T</variation>
    <location>
        <position position="244"/>
    </location>
</feature>
<dbReference type="EMBL" id="AB026636">
    <property type="protein sequence ID" value="BAA94982.1"/>
    <property type="status" value="ALT_SEQ"/>
    <property type="molecule type" value="Genomic_DNA"/>
</dbReference>
<dbReference type="EMBL" id="CP002686">
    <property type="protein sequence ID" value="AEE75897.1"/>
    <property type="molecule type" value="Genomic_DNA"/>
</dbReference>
<dbReference type="EMBL" id="AY093112">
    <property type="protein sequence ID" value="AAM13111.1"/>
    <property type="molecule type" value="mRNA"/>
</dbReference>
<dbReference type="EMBL" id="BT008405">
    <property type="protein sequence ID" value="AAP37764.1"/>
    <property type="molecule type" value="mRNA"/>
</dbReference>
<dbReference type="RefSeq" id="NP_188329.1">
    <molecule id="Q8RWG2-1"/>
    <property type="nucleotide sequence ID" value="NM_112580.5"/>
</dbReference>
<dbReference type="SMR" id="Q8RWG2"/>
<dbReference type="FunCoup" id="Q8RWG2">
    <property type="interactions" value="1354"/>
</dbReference>
<dbReference type="STRING" id="3702.Q8RWG2"/>
<dbReference type="iPTMnet" id="Q8RWG2"/>
<dbReference type="PaxDb" id="3702-AT3G17040.1"/>
<dbReference type="ProteomicsDB" id="224484">
    <molecule id="Q8RWG2-1"/>
</dbReference>
<dbReference type="EnsemblPlants" id="AT3G17040.1">
    <molecule id="Q8RWG2-1"/>
    <property type="protein sequence ID" value="AT3G17040.1"/>
    <property type="gene ID" value="AT3G17040"/>
</dbReference>
<dbReference type="GeneID" id="820961"/>
<dbReference type="Gramene" id="AT3G17040.1">
    <molecule id="Q8RWG2-1"/>
    <property type="protein sequence ID" value="AT3G17040.1"/>
    <property type="gene ID" value="AT3G17040"/>
</dbReference>
<dbReference type="KEGG" id="ath:AT3G17040"/>
<dbReference type="Araport" id="AT3G17040"/>
<dbReference type="TAIR" id="AT3G17040">
    <property type="gene designation" value="HCF107"/>
</dbReference>
<dbReference type="eggNOG" id="KOG1124">
    <property type="taxonomic scope" value="Eukaryota"/>
</dbReference>
<dbReference type="InParanoid" id="Q8RWG2"/>
<dbReference type="PhylomeDB" id="Q8RWG2"/>
<dbReference type="PRO" id="PR:Q8RWG2"/>
<dbReference type="Proteomes" id="UP000006548">
    <property type="component" value="Chromosome 3"/>
</dbReference>
<dbReference type="ExpressionAtlas" id="Q8RWG2">
    <property type="expression patterns" value="baseline and differential"/>
</dbReference>
<dbReference type="GO" id="GO:0009507">
    <property type="term" value="C:chloroplast"/>
    <property type="evidence" value="ECO:0007005"/>
    <property type="project" value="TAIR"/>
</dbReference>
<dbReference type="GO" id="GO:0009941">
    <property type="term" value="C:chloroplast envelope"/>
    <property type="evidence" value="ECO:0000314"/>
    <property type="project" value="TAIR"/>
</dbReference>
<dbReference type="GO" id="GO:0031969">
    <property type="term" value="C:chloroplast membrane"/>
    <property type="evidence" value="ECO:0000314"/>
    <property type="project" value="UniProtKB"/>
</dbReference>
<dbReference type="GO" id="GO:0009570">
    <property type="term" value="C:chloroplast stroma"/>
    <property type="evidence" value="ECO:0000314"/>
    <property type="project" value="UniProtKB"/>
</dbReference>
<dbReference type="GO" id="GO:0000325">
    <property type="term" value="C:plant-type vacuole"/>
    <property type="evidence" value="ECO:0007005"/>
    <property type="project" value="TAIR"/>
</dbReference>
<dbReference type="GO" id="GO:0003729">
    <property type="term" value="F:mRNA binding"/>
    <property type="evidence" value="ECO:0000314"/>
    <property type="project" value="TAIR"/>
</dbReference>
<dbReference type="GO" id="GO:0003727">
    <property type="term" value="F:single-stranded RNA binding"/>
    <property type="evidence" value="ECO:0000314"/>
    <property type="project" value="TAIR"/>
</dbReference>
<dbReference type="GO" id="GO:0006397">
    <property type="term" value="P:mRNA processing"/>
    <property type="evidence" value="ECO:0000315"/>
    <property type="project" value="TAIR"/>
</dbReference>
<dbReference type="GO" id="GO:0009657">
    <property type="term" value="P:plastid organization"/>
    <property type="evidence" value="ECO:0000315"/>
    <property type="project" value="TAIR"/>
</dbReference>
<dbReference type="GO" id="GO:0006417">
    <property type="term" value="P:regulation of translation"/>
    <property type="evidence" value="ECO:0000315"/>
    <property type="project" value="UniProtKB"/>
</dbReference>
<dbReference type="GO" id="GO:0010114">
    <property type="term" value="P:response to red light"/>
    <property type="evidence" value="ECO:0000270"/>
    <property type="project" value="UniProtKB"/>
</dbReference>
<dbReference type="GO" id="GO:0006396">
    <property type="term" value="P:RNA processing"/>
    <property type="evidence" value="ECO:0000315"/>
    <property type="project" value="UniProtKB"/>
</dbReference>
<dbReference type="FunFam" id="1.25.40.10:FF:001264">
    <property type="entry name" value="High chlorophyll fluorescent 107"/>
    <property type="match status" value="1"/>
</dbReference>
<dbReference type="Gene3D" id="1.25.40.10">
    <property type="entry name" value="Tetratricopeptide repeat domain"/>
    <property type="match status" value="2"/>
</dbReference>
<dbReference type="InterPro" id="IPR003107">
    <property type="entry name" value="HAT"/>
</dbReference>
<dbReference type="InterPro" id="IPR044624">
    <property type="entry name" value="Mbb1-like"/>
</dbReference>
<dbReference type="InterPro" id="IPR011990">
    <property type="entry name" value="TPR-like_helical_dom_sf"/>
</dbReference>
<dbReference type="InterPro" id="IPR019734">
    <property type="entry name" value="TPR_rpt"/>
</dbReference>
<dbReference type="PANTHER" id="PTHR44917">
    <property type="entry name" value="PROTEIN HIGH CHLOROPHYLL FLUORESCENT 107"/>
    <property type="match status" value="1"/>
</dbReference>
<dbReference type="PANTHER" id="PTHR44917:SF1">
    <property type="entry name" value="PROTEIN HIGH CHLOROPHYLL FLUORESCENT 107"/>
    <property type="match status" value="1"/>
</dbReference>
<dbReference type="Pfam" id="PF13428">
    <property type="entry name" value="TPR_14"/>
    <property type="match status" value="1"/>
</dbReference>
<dbReference type="Pfam" id="PF13432">
    <property type="entry name" value="TPR_16"/>
    <property type="match status" value="1"/>
</dbReference>
<dbReference type="SMART" id="SM00386">
    <property type="entry name" value="HAT"/>
    <property type="match status" value="9"/>
</dbReference>
<dbReference type="SMART" id="SM00028">
    <property type="entry name" value="TPR"/>
    <property type="match status" value="9"/>
</dbReference>
<dbReference type="SUPFAM" id="SSF48452">
    <property type="entry name" value="TPR-like"/>
    <property type="match status" value="2"/>
</dbReference>
<dbReference type="PROSITE" id="PS50005">
    <property type="entry name" value="TPR"/>
    <property type="match status" value="5"/>
</dbReference>
<dbReference type="PROSITE" id="PS50293">
    <property type="entry name" value="TPR_REGION"/>
    <property type="match status" value="1"/>
</dbReference>
<proteinExistence type="evidence at protein level"/>
<reference key="1">
    <citation type="journal article" date="2000" name="DNA Res.">
        <title>Structural analysis of Arabidopsis thaliana chromosome 3. I. Sequence features of the regions of 4,504,864 bp covered by sixty P1 and TAC clones.</title>
        <authorList>
            <person name="Sato S."/>
            <person name="Nakamura Y."/>
            <person name="Kaneko T."/>
            <person name="Katoh T."/>
            <person name="Asamizu E."/>
            <person name="Tabata S."/>
        </authorList>
    </citation>
    <scope>NUCLEOTIDE SEQUENCE [LARGE SCALE GENOMIC DNA]</scope>
    <source>
        <strain>cv. Columbia</strain>
    </source>
</reference>
<reference key="2">
    <citation type="journal article" date="2017" name="Plant J.">
        <title>Araport11: a complete reannotation of the Arabidopsis thaliana reference genome.</title>
        <authorList>
            <person name="Cheng C.Y."/>
            <person name="Krishnakumar V."/>
            <person name="Chan A.P."/>
            <person name="Thibaud-Nissen F."/>
            <person name="Schobel S."/>
            <person name="Town C.D."/>
        </authorList>
    </citation>
    <scope>GENOME REANNOTATION</scope>
    <source>
        <strain>cv. Columbia</strain>
    </source>
</reference>
<reference key="3">
    <citation type="journal article" date="2003" name="Science">
        <title>Empirical analysis of transcriptional activity in the Arabidopsis genome.</title>
        <authorList>
            <person name="Yamada K."/>
            <person name="Lim J."/>
            <person name="Dale J.M."/>
            <person name="Chen H."/>
            <person name="Shinn P."/>
            <person name="Palm C.J."/>
            <person name="Southwick A.M."/>
            <person name="Wu H.C."/>
            <person name="Kim C.J."/>
            <person name="Nguyen M."/>
            <person name="Pham P.K."/>
            <person name="Cheuk R.F."/>
            <person name="Karlin-Newmann G."/>
            <person name="Liu S.X."/>
            <person name="Lam B."/>
            <person name="Sakano H."/>
            <person name="Wu T."/>
            <person name="Yu G."/>
            <person name="Miranda M."/>
            <person name="Quach H.L."/>
            <person name="Tripp M."/>
            <person name="Chang C.H."/>
            <person name="Lee J.M."/>
            <person name="Toriumi M.J."/>
            <person name="Chan M.M."/>
            <person name="Tang C.C."/>
            <person name="Onodera C.S."/>
            <person name="Deng J.M."/>
            <person name="Akiyama K."/>
            <person name="Ansari Y."/>
            <person name="Arakawa T."/>
            <person name="Banh J."/>
            <person name="Banno F."/>
            <person name="Bowser L."/>
            <person name="Brooks S.Y."/>
            <person name="Carninci P."/>
            <person name="Chao Q."/>
            <person name="Choy N."/>
            <person name="Enju A."/>
            <person name="Goldsmith A.D."/>
            <person name="Gurjal M."/>
            <person name="Hansen N.F."/>
            <person name="Hayashizaki Y."/>
            <person name="Johnson-Hopson C."/>
            <person name="Hsuan V.W."/>
            <person name="Iida K."/>
            <person name="Karnes M."/>
            <person name="Khan S."/>
            <person name="Koesema E."/>
            <person name="Ishida J."/>
            <person name="Jiang P.X."/>
            <person name="Jones T."/>
            <person name="Kawai J."/>
            <person name="Kamiya A."/>
            <person name="Meyers C."/>
            <person name="Nakajima M."/>
            <person name="Narusaka M."/>
            <person name="Seki M."/>
            <person name="Sakurai T."/>
            <person name="Satou M."/>
            <person name="Tamse R."/>
            <person name="Vaysberg M."/>
            <person name="Wallender E.K."/>
            <person name="Wong C."/>
            <person name="Yamamura Y."/>
            <person name="Yuan S."/>
            <person name="Shinozaki K."/>
            <person name="Davis R.W."/>
            <person name="Theologis A."/>
            <person name="Ecker J.R."/>
        </authorList>
    </citation>
    <scope>NUCLEOTIDE SEQUENCE [LARGE SCALE MRNA]</scope>
    <source>
        <strain>cv. Columbia</strain>
    </source>
</reference>
<reference key="4">
    <citation type="journal article" date="2001" name="Plant Cell">
        <title>The nucleus-encoded HCF107 gene of Arabidopsis provides a link between intercistronic RNA processing and the accumulation of translation-competent psbH transcripts in chloroplasts.</title>
        <authorList>
            <person name="Felder S."/>
            <person name="Meierhoff K."/>
            <person name="Sane A.P."/>
            <person name="Meurer J."/>
            <person name="Driemel C."/>
            <person name="Pluecken H."/>
            <person name="Klaff P."/>
            <person name="Stein B."/>
            <person name="Bechtold N."/>
            <person name="Westhoff P."/>
        </authorList>
    </citation>
    <scope>FUNCTION</scope>
    <scope>DISRUPTION PHENOTYPE</scope>
</reference>
<reference key="5">
    <citation type="journal article" date="2004" name="Proc. Natl. Acad. Sci. U.S.A.">
        <title>The phytochrome-interacting transcription factor, PIF3, acts early, selectively, and positively in light-induced chloroplast development.</title>
        <authorList>
            <person name="Monte E."/>
            <person name="Tepperman J.M."/>
            <person name="Al-Sady B."/>
            <person name="Kaczorowski K.A."/>
            <person name="Alonso J.M."/>
            <person name="Ecker J.R."/>
            <person name="Li X."/>
            <person name="Zhang Y."/>
            <person name="Quail P.H."/>
        </authorList>
    </citation>
    <scope>INDUCTION BY RED LIGHT</scope>
</reference>
<reference key="6">
    <citation type="journal article" date="2005" name="Plant J.">
        <title>The nuclear gene HCF107 encodes a membrane-associated R-TPR (RNA tetratricopeptide repeat)-containing protein involved in expression of the plastidial psbH gene in Arabidopsis.</title>
        <authorList>
            <person name="Sane A.P."/>
            <person name="Stein B."/>
            <person name="Westhoff P."/>
        </authorList>
    </citation>
    <scope>FUNCTION</scope>
    <scope>DISRUPTION PHENOTYPE</scope>
    <scope>MUTAGENESIS OF ALA-244</scope>
    <scope>SUBCELLULAR LOCATION</scope>
    <scope>SUBUNIT</scope>
    <source>
        <strain>cv. Columbia</strain>
    </source>
</reference>
<reference key="7">
    <citation type="journal article" date="2012" name="Proc. Natl. Acad. Sci. U.S.A.">
        <title>RNA binding and RNA remodeling activities of the half-a-tetratricopeptide (HAT) protein HCF107 underlie its effects on gene expression.</title>
        <authorList>
            <person name="Hammani K."/>
            <person name="Cook W.B."/>
            <person name="Barkan A."/>
        </authorList>
    </citation>
    <scope>FUNCTION</scope>
    <scope>SUBUNIT</scope>
    <scope>DISRUPTION PHENOTYPE</scope>
</reference>
<keyword id="KW-0025">Alternative splicing</keyword>
<keyword id="KW-0150">Chloroplast</keyword>
<keyword id="KW-0472">Membrane</keyword>
<keyword id="KW-0507">mRNA processing</keyword>
<keyword id="KW-0934">Plastid</keyword>
<keyword id="KW-1185">Reference proteome</keyword>
<keyword id="KW-0677">Repeat</keyword>
<keyword id="KW-0694">RNA-binding</keyword>
<keyword id="KW-0802">TPR repeat</keyword>
<keyword id="KW-0809">Transit peptide</keyword>
<sequence>MHFFFVPNSSSSSPSPANTSSFSLSFLTPQIPENLCKSPTKIHIGTHGISGQSFLSHPTFSSKNTYLYAVVDRSSSGVFSPQKESANGEGEESNTEEGVLVVRRPLLENSDKESSEEEGKKYPARIDAGLSNIAKKMPIFEPERSESSSSSSAAAAARAQERPLAVNLDLSLYKAKVLARNFRYKDAEKILEKCIAYWPEDGRPYVALGKILSKQSKLAEARILYEKGCQSTQGENSYIWQCWAVLENRLGNVRRARELFDAATVADKKHVAAWHGWANLEIKQGNISKARNLLAKGLKFCGRNEYIYQTLALLEAKAGRYEQARYLFKQATICNSRSCASWLAWAQLEIQQERYPAARKLFEKAVQASPKNRFAWHVWGVFEAGVGNVERGRKLLKIGHALNPRDPVLLQSLGLLEYKHSSANLARALLRRASELDPRHQPVWIAWGWMEWKEGNTTTARELYQRALSIDANTESASRCLQAWGVLEQRAGNLSAARRLFRSSLNINSQSYVTWMTWAQLEEDQGDTERAEEIRNLYFQQRTEVVDDASWVTGFLDIIDPALDTVKRLLNFGQNNDNNRLTTTLRNMNRTKDSQSNQQPESSAGREDIETGSGFNLDVFLRSKLSLDPLKLDVNLDSKRLERFTRGRINGA</sequence>
<accession>Q8RWG2</accession>
<accession>Q9LSP3</accession>
<protein>
    <recommendedName>
        <fullName evidence="11">Protein high chlorophyll fluorescent 107</fullName>
    </recommendedName>
</protein>
<name>CF107_ARATH</name>
<gene>
    <name evidence="11" type="primary">HCF107</name>
    <name evidence="7" type="synonym">MBB1</name>
    <name evidence="9" type="ordered locus">At3g17040</name>
    <name evidence="12" type="ORF">K14A17.11</name>
</gene>
<organism evidence="10">
    <name type="scientific">Arabidopsis thaliana</name>
    <name type="common">Mouse-ear cress</name>
    <dbReference type="NCBI Taxonomy" id="3702"/>
    <lineage>
        <taxon>Eukaryota</taxon>
        <taxon>Viridiplantae</taxon>
        <taxon>Streptophyta</taxon>
        <taxon>Embryophyta</taxon>
        <taxon>Tracheophyta</taxon>
        <taxon>Spermatophyta</taxon>
        <taxon>Magnoliopsida</taxon>
        <taxon>eudicotyledons</taxon>
        <taxon>Gunneridae</taxon>
        <taxon>Pentapetalae</taxon>
        <taxon>rosids</taxon>
        <taxon>malvids</taxon>
        <taxon>Brassicales</taxon>
        <taxon>Brassicaceae</taxon>
        <taxon>Camelineae</taxon>
        <taxon>Arabidopsis</taxon>
    </lineage>
</organism>